<evidence type="ECO:0000255" key="1"/>
<evidence type="ECO:0000255" key="2">
    <source>
        <dbReference type="PROSITE-ProRule" id="PRU00448"/>
    </source>
</evidence>
<evidence type="ECO:0000305" key="3"/>
<accession>Q54LX0</accession>
<accession>Q6DN51</accession>
<keyword id="KW-0106">Calcium</keyword>
<keyword id="KW-0449">Lipoprotein</keyword>
<keyword id="KW-0479">Metal-binding</keyword>
<keyword id="KW-0519">Myristate</keyword>
<keyword id="KW-1185">Reference proteome</keyword>
<keyword id="KW-0677">Repeat</keyword>
<protein>
    <recommendedName>
        <fullName>Calcium-binding protein M</fullName>
    </recommendedName>
</protein>
<comment type="similarity">
    <text evidence="3">Belongs to the recoverin family.</text>
</comment>
<dbReference type="EMBL" id="AY655131">
    <property type="protein sequence ID" value="AAT72747.1"/>
    <property type="molecule type" value="mRNA"/>
</dbReference>
<dbReference type="EMBL" id="AAFI02000085">
    <property type="protein sequence ID" value="EAL64210.1"/>
    <property type="molecule type" value="Genomic_DNA"/>
</dbReference>
<dbReference type="RefSeq" id="XP_637710.1">
    <property type="nucleotide sequence ID" value="XM_632618.1"/>
</dbReference>
<dbReference type="SMR" id="Q54LX0"/>
<dbReference type="FunCoup" id="Q54LX0">
    <property type="interactions" value="539"/>
</dbReference>
<dbReference type="STRING" id="44689.Q54LX0"/>
<dbReference type="PaxDb" id="44689-DDB0231014"/>
<dbReference type="EnsemblProtists" id="EAL64210">
    <property type="protein sequence ID" value="EAL64210"/>
    <property type="gene ID" value="DDB_G0286371"/>
</dbReference>
<dbReference type="GeneID" id="8625575"/>
<dbReference type="KEGG" id="ddi:DDB_G0286371"/>
<dbReference type="dictyBase" id="DDB_G0286371">
    <property type="gene designation" value="cbpM"/>
</dbReference>
<dbReference type="VEuPathDB" id="AmoebaDB:DDB_G0286371"/>
<dbReference type="eggNOG" id="KOG0044">
    <property type="taxonomic scope" value="Eukaryota"/>
</dbReference>
<dbReference type="HOGENOM" id="CLU_1436878_0_0_1"/>
<dbReference type="InParanoid" id="Q54LX0"/>
<dbReference type="OMA" id="TITKKEW"/>
<dbReference type="PhylomeDB" id="Q54LX0"/>
<dbReference type="Reactome" id="R-DDI-2514859">
    <property type="pathway name" value="Inactivation, recovery and regulation of the phototransduction cascade"/>
</dbReference>
<dbReference type="PRO" id="PR:Q54LX0"/>
<dbReference type="Proteomes" id="UP000002195">
    <property type="component" value="Chromosome 4"/>
</dbReference>
<dbReference type="GO" id="GO:0045335">
    <property type="term" value="C:phagocytic vesicle"/>
    <property type="evidence" value="ECO:0007005"/>
    <property type="project" value="dictyBase"/>
</dbReference>
<dbReference type="GO" id="GO:0005509">
    <property type="term" value="F:calcium ion binding"/>
    <property type="evidence" value="ECO:0000250"/>
    <property type="project" value="dictyBase"/>
</dbReference>
<dbReference type="GO" id="GO:0009966">
    <property type="term" value="P:regulation of signal transduction"/>
    <property type="evidence" value="ECO:0000318"/>
    <property type="project" value="GO_Central"/>
</dbReference>
<dbReference type="CDD" id="cd00051">
    <property type="entry name" value="EFh"/>
    <property type="match status" value="3"/>
</dbReference>
<dbReference type="FunFam" id="1.10.238.10:FF:000009">
    <property type="entry name" value="Visinin-like protein 1"/>
    <property type="match status" value="1"/>
</dbReference>
<dbReference type="Gene3D" id="1.10.238.10">
    <property type="entry name" value="EF-hand"/>
    <property type="match status" value="1"/>
</dbReference>
<dbReference type="InterPro" id="IPR011992">
    <property type="entry name" value="EF-hand-dom_pair"/>
</dbReference>
<dbReference type="InterPro" id="IPR018247">
    <property type="entry name" value="EF_Hand_1_Ca_BS"/>
</dbReference>
<dbReference type="InterPro" id="IPR002048">
    <property type="entry name" value="EF_hand_dom"/>
</dbReference>
<dbReference type="InterPro" id="IPR028846">
    <property type="entry name" value="Recoverin"/>
</dbReference>
<dbReference type="PANTHER" id="PTHR23055">
    <property type="entry name" value="CALCIUM BINDING PROTEINS"/>
    <property type="match status" value="1"/>
</dbReference>
<dbReference type="PANTHER" id="PTHR23055:SF178">
    <property type="entry name" value="NEUROCALCIN HOMOLOG"/>
    <property type="match status" value="1"/>
</dbReference>
<dbReference type="Pfam" id="PF13202">
    <property type="entry name" value="EF-hand_5"/>
    <property type="match status" value="1"/>
</dbReference>
<dbReference type="Pfam" id="PF13499">
    <property type="entry name" value="EF-hand_7"/>
    <property type="match status" value="1"/>
</dbReference>
<dbReference type="PRINTS" id="PR00450">
    <property type="entry name" value="RECOVERIN"/>
</dbReference>
<dbReference type="SMART" id="SM00054">
    <property type="entry name" value="EFh"/>
    <property type="match status" value="4"/>
</dbReference>
<dbReference type="SUPFAM" id="SSF47473">
    <property type="entry name" value="EF-hand"/>
    <property type="match status" value="1"/>
</dbReference>
<dbReference type="PROSITE" id="PS00018">
    <property type="entry name" value="EF_HAND_1"/>
    <property type="match status" value="3"/>
</dbReference>
<dbReference type="PROSITE" id="PS50222">
    <property type="entry name" value="EF_HAND_2"/>
    <property type="match status" value="4"/>
</dbReference>
<sequence>MGQQNSKLTKSDIEFIGKNSNFSKEEVANIYGEFKKFDKDGNGSFDRKEFVLFFKSKLPNYPEDNLNKLFDAFDSDKSNTIDFKELTVALSIIGKGSAEDKLKVLFDIYDKDKSGILEKKEVDEMIALMKNVGVSLGKSPGDIELFIVKLFEKIDKDKNNLISREEFLTEGARSPSLLTLLGI</sequence>
<organism>
    <name type="scientific">Dictyostelium discoideum</name>
    <name type="common">Social amoeba</name>
    <dbReference type="NCBI Taxonomy" id="44689"/>
    <lineage>
        <taxon>Eukaryota</taxon>
        <taxon>Amoebozoa</taxon>
        <taxon>Evosea</taxon>
        <taxon>Eumycetozoa</taxon>
        <taxon>Dictyostelia</taxon>
        <taxon>Dictyosteliales</taxon>
        <taxon>Dictyosteliaceae</taxon>
        <taxon>Dictyostelium</taxon>
    </lineage>
</organism>
<reference key="1">
    <citation type="journal article" date="2004" name="Dev. Growth Differ.">
        <title>Disruption of the NCS-1/frequenin-related ncsA gene in Dictyostelium discoideum accelerates development.</title>
        <authorList>
            <person name="Coukell B."/>
            <person name="Cameron A."/>
            <person name="Perusini S."/>
            <person name="Shim K."/>
        </authorList>
    </citation>
    <scope>NUCLEOTIDE SEQUENCE [MRNA]</scope>
    <source>
        <strain>AX4</strain>
    </source>
</reference>
<reference key="2">
    <citation type="journal article" date="2005" name="Nature">
        <title>The genome of the social amoeba Dictyostelium discoideum.</title>
        <authorList>
            <person name="Eichinger L."/>
            <person name="Pachebat J.A."/>
            <person name="Gloeckner G."/>
            <person name="Rajandream M.A."/>
            <person name="Sucgang R."/>
            <person name="Berriman M."/>
            <person name="Song J."/>
            <person name="Olsen R."/>
            <person name="Szafranski K."/>
            <person name="Xu Q."/>
            <person name="Tunggal B."/>
            <person name="Kummerfeld S."/>
            <person name="Madera M."/>
            <person name="Konfortov B.A."/>
            <person name="Rivero F."/>
            <person name="Bankier A.T."/>
            <person name="Lehmann R."/>
            <person name="Hamlin N."/>
            <person name="Davies R."/>
            <person name="Gaudet P."/>
            <person name="Fey P."/>
            <person name="Pilcher K."/>
            <person name="Chen G."/>
            <person name="Saunders D."/>
            <person name="Sodergren E.J."/>
            <person name="Davis P."/>
            <person name="Kerhornou A."/>
            <person name="Nie X."/>
            <person name="Hall N."/>
            <person name="Anjard C."/>
            <person name="Hemphill L."/>
            <person name="Bason N."/>
            <person name="Farbrother P."/>
            <person name="Desany B."/>
            <person name="Just E."/>
            <person name="Morio T."/>
            <person name="Rost R."/>
            <person name="Churcher C.M."/>
            <person name="Cooper J."/>
            <person name="Haydock S."/>
            <person name="van Driessche N."/>
            <person name="Cronin A."/>
            <person name="Goodhead I."/>
            <person name="Muzny D.M."/>
            <person name="Mourier T."/>
            <person name="Pain A."/>
            <person name="Lu M."/>
            <person name="Harper D."/>
            <person name="Lindsay R."/>
            <person name="Hauser H."/>
            <person name="James K.D."/>
            <person name="Quiles M."/>
            <person name="Madan Babu M."/>
            <person name="Saito T."/>
            <person name="Buchrieser C."/>
            <person name="Wardroper A."/>
            <person name="Felder M."/>
            <person name="Thangavelu M."/>
            <person name="Johnson D."/>
            <person name="Knights A."/>
            <person name="Loulseged H."/>
            <person name="Mungall K.L."/>
            <person name="Oliver K."/>
            <person name="Price C."/>
            <person name="Quail M.A."/>
            <person name="Urushihara H."/>
            <person name="Hernandez J."/>
            <person name="Rabbinowitsch E."/>
            <person name="Steffen D."/>
            <person name="Sanders M."/>
            <person name="Ma J."/>
            <person name="Kohara Y."/>
            <person name="Sharp S."/>
            <person name="Simmonds M.N."/>
            <person name="Spiegler S."/>
            <person name="Tivey A."/>
            <person name="Sugano S."/>
            <person name="White B."/>
            <person name="Walker D."/>
            <person name="Woodward J.R."/>
            <person name="Winckler T."/>
            <person name="Tanaka Y."/>
            <person name="Shaulsky G."/>
            <person name="Schleicher M."/>
            <person name="Weinstock G.M."/>
            <person name="Rosenthal A."/>
            <person name="Cox E.C."/>
            <person name="Chisholm R.L."/>
            <person name="Gibbs R.A."/>
            <person name="Loomis W.F."/>
            <person name="Platzer M."/>
            <person name="Kay R.R."/>
            <person name="Williams J.G."/>
            <person name="Dear P.H."/>
            <person name="Noegel A.A."/>
            <person name="Barrell B.G."/>
            <person name="Kuspa A."/>
        </authorList>
    </citation>
    <scope>NUCLEOTIDE SEQUENCE [LARGE SCALE GENOMIC DNA]</scope>
    <source>
        <strain>AX4</strain>
    </source>
</reference>
<reference key="3">
    <citation type="journal article" date="2006" name="Mol. Cell. Proteomics">
        <title>Proteomics fingerprinting of phagosome maturation and evidence for the role of a Galpha during uptake.</title>
        <authorList>
            <person name="Gotthardt D."/>
            <person name="Blancheteau V."/>
            <person name="Bosserhoff A."/>
            <person name="Ruppert T."/>
            <person name="Delorenzi M."/>
            <person name="Soldati T."/>
        </authorList>
    </citation>
    <scope>IDENTIFICATION BY MASS SPECTROMETRY [LARGE SCALE ANALYSIS]</scope>
    <source>
        <strain>AX2</strain>
    </source>
</reference>
<proteinExistence type="evidence at protein level"/>
<feature type="initiator methionine" description="Removed" evidence="1">
    <location>
        <position position="1"/>
    </location>
</feature>
<feature type="chain" id="PRO_0000323767" description="Calcium-binding protein M">
    <location>
        <begin position="2"/>
        <end position="183"/>
    </location>
</feature>
<feature type="domain" description="EF-hand 1" evidence="2">
    <location>
        <begin position="25"/>
        <end position="60"/>
    </location>
</feature>
<feature type="domain" description="EF-hand 2" evidence="2">
    <location>
        <begin position="61"/>
        <end position="96"/>
    </location>
</feature>
<feature type="domain" description="EF-hand 3" evidence="2">
    <location>
        <begin position="97"/>
        <end position="132"/>
    </location>
</feature>
<feature type="domain" description="EF-hand 4" evidence="2">
    <location>
        <begin position="142"/>
        <end position="177"/>
    </location>
</feature>
<feature type="binding site" evidence="2">
    <location>
        <position position="74"/>
    </location>
    <ligand>
        <name>Ca(2+)</name>
        <dbReference type="ChEBI" id="CHEBI:29108"/>
        <label>1</label>
    </ligand>
</feature>
<feature type="binding site" evidence="2">
    <location>
        <position position="76"/>
    </location>
    <ligand>
        <name>Ca(2+)</name>
        <dbReference type="ChEBI" id="CHEBI:29108"/>
        <label>1</label>
    </ligand>
</feature>
<feature type="binding site" evidence="2">
    <location>
        <position position="78"/>
    </location>
    <ligand>
        <name>Ca(2+)</name>
        <dbReference type="ChEBI" id="CHEBI:29108"/>
        <label>1</label>
    </ligand>
</feature>
<feature type="binding site" evidence="2">
    <location>
        <position position="80"/>
    </location>
    <ligand>
        <name>Ca(2+)</name>
        <dbReference type="ChEBI" id="CHEBI:29108"/>
        <label>1</label>
    </ligand>
</feature>
<feature type="binding site" evidence="2">
    <location>
        <position position="85"/>
    </location>
    <ligand>
        <name>Ca(2+)</name>
        <dbReference type="ChEBI" id="CHEBI:29108"/>
        <label>1</label>
    </ligand>
</feature>
<feature type="binding site" evidence="2">
    <location>
        <position position="110"/>
    </location>
    <ligand>
        <name>Ca(2+)</name>
        <dbReference type="ChEBI" id="CHEBI:29108"/>
        <label>2</label>
    </ligand>
</feature>
<feature type="binding site" evidence="2">
    <location>
        <position position="112"/>
    </location>
    <ligand>
        <name>Ca(2+)</name>
        <dbReference type="ChEBI" id="CHEBI:29108"/>
        <label>2</label>
    </ligand>
</feature>
<feature type="binding site" evidence="2">
    <location>
        <position position="114"/>
    </location>
    <ligand>
        <name>Ca(2+)</name>
        <dbReference type="ChEBI" id="CHEBI:29108"/>
        <label>2</label>
    </ligand>
</feature>
<feature type="binding site" evidence="2">
    <location>
        <position position="121"/>
    </location>
    <ligand>
        <name>Ca(2+)</name>
        <dbReference type="ChEBI" id="CHEBI:29108"/>
        <label>2</label>
    </ligand>
</feature>
<feature type="binding site" evidence="2">
    <location>
        <position position="155"/>
    </location>
    <ligand>
        <name>Ca(2+)</name>
        <dbReference type="ChEBI" id="CHEBI:29108"/>
        <label>3</label>
    </ligand>
</feature>
<feature type="binding site" evidence="2">
    <location>
        <position position="157"/>
    </location>
    <ligand>
        <name>Ca(2+)</name>
        <dbReference type="ChEBI" id="CHEBI:29108"/>
        <label>3</label>
    </ligand>
</feature>
<feature type="binding site" evidence="2">
    <location>
        <position position="159"/>
    </location>
    <ligand>
        <name>Ca(2+)</name>
        <dbReference type="ChEBI" id="CHEBI:29108"/>
        <label>3</label>
    </ligand>
</feature>
<feature type="binding site" evidence="2">
    <location>
        <position position="166"/>
    </location>
    <ligand>
        <name>Ca(2+)</name>
        <dbReference type="ChEBI" id="CHEBI:29108"/>
        <label>3</label>
    </ligand>
</feature>
<feature type="lipid moiety-binding region" description="N-myristoyl glycine" evidence="1">
    <location>
        <position position="2"/>
    </location>
</feature>
<feature type="sequence conflict" description="In Ref. 1; AAT72747." evidence="3" ref="1">
    <original>N</original>
    <variation>T</variation>
    <location>
        <position position="159"/>
    </location>
</feature>
<gene>
    <name type="primary">cbpM</name>
    <name type="ORF">DDB_G0286371</name>
</gene>
<name>CBPM_DICDI</name>